<proteinExistence type="inferred from homology"/>
<name>COX3_CANPA</name>
<gene>
    <name type="primary">COX3</name>
</gene>
<sequence>MTNNVRGYLQLHPFHLVGPSPWPIFTSFSLMDLAFSIALNSHGYMANNFYIILSIITVLYSMTLWFKDIIAESTYLGDHTIAVKRGLNQGFLLFVVSEILIFASLFWAYLHSAVNPTMDLGMSWPPVGIDVISPAELPLLNTIILLASGVTITYAHHALINGNRANTLYGFIYSTLLIALFVMFQFLEYKYAGFTITDGVYGSTFYSLTGLHGLHMIMLTIMLVICTWRVYNYDFTNTSHVGAETTILYLHVLDVIWLFIYIIVYWWGS</sequence>
<dbReference type="EC" id="7.1.1.9"/>
<dbReference type="EMBL" id="X74411">
    <property type="protein sequence ID" value="CAE54607.1"/>
    <property type="molecule type" value="Genomic_DNA"/>
</dbReference>
<dbReference type="RefSeq" id="NP_943645.1">
    <property type="nucleotide sequence ID" value="NC_005253.2"/>
</dbReference>
<dbReference type="SMR" id="Q34214"/>
<dbReference type="GeneID" id="2657780"/>
<dbReference type="CGD" id="CAL0000144971">
    <property type="gene designation" value="CapafMp13"/>
</dbReference>
<dbReference type="VEuPathDB" id="FungiDB:CapafMp13"/>
<dbReference type="GO" id="GO:0005743">
    <property type="term" value="C:mitochondrial inner membrane"/>
    <property type="evidence" value="ECO:0007669"/>
    <property type="project" value="UniProtKB-SubCell"/>
</dbReference>
<dbReference type="GO" id="GO:0045277">
    <property type="term" value="C:respiratory chain complex IV"/>
    <property type="evidence" value="ECO:0007669"/>
    <property type="project" value="EnsemblFungi"/>
</dbReference>
<dbReference type="GO" id="GO:0004129">
    <property type="term" value="F:cytochrome-c oxidase activity"/>
    <property type="evidence" value="ECO:0007669"/>
    <property type="project" value="UniProtKB-EC"/>
</dbReference>
<dbReference type="GO" id="GO:0048039">
    <property type="term" value="F:ubiquinone binding"/>
    <property type="evidence" value="ECO:0007669"/>
    <property type="project" value="EnsemblFungi"/>
</dbReference>
<dbReference type="GO" id="GO:0006123">
    <property type="term" value="P:mitochondrial electron transport, cytochrome c to oxygen"/>
    <property type="evidence" value="ECO:0007669"/>
    <property type="project" value="EnsemblFungi"/>
</dbReference>
<dbReference type="CDD" id="cd01665">
    <property type="entry name" value="Cyt_c_Oxidase_III"/>
    <property type="match status" value="1"/>
</dbReference>
<dbReference type="FunFam" id="1.10.287.70:FF:000082">
    <property type="entry name" value="Cytochrome c oxidase subunit 3"/>
    <property type="match status" value="1"/>
</dbReference>
<dbReference type="Gene3D" id="1.10.287.70">
    <property type="match status" value="1"/>
</dbReference>
<dbReference type="Gene3D" id="1.20.120.80">
    <property type="entry name" value="Cytochrome c oxidase, subunit III, four-helix bundle"/>
    <property type="match status" value="1"/>
</dbReference>
<dbReference type="InterPro" id="IPR024791">
    <property type="entry name" value="Cyt_c/ubiquinol_Oxase_su3"/>
</dbReference>
<dbReference type="InterPro" id="IPR033945">
    <property type="entry name" value="Cyt_c_oxase_su3_dom"/>
</dbReference>
<dbReference type="InterPro" id="IPR000298">
    <property type="entry name" value="Cyt_c_oxidase-like_su3"/>
</dbReference>
<dbReference type="InterPro" id="IPR035973">
    <property type="entry name" value="Cyt_c_oxidase_su3-like_sf"/>
</dbReference>
<dbReference type="InterPro" id="IPR013833">
    <property type="entry name" value="Cyt_c_oxidase_su3_a-hlx"/>
</dbReference>
<dbReference type="PANTHER" id="PTHR11403:SF7">
    <property type="entry name" value="CYTOCHROME C OXIDASE SUBUNIT 3"/>
    <property type="match status" value="1"/>
</dbReference>
<dbReference type="PANTHER" id="PTHR11403">
    <property type="entry name" value="CYTOCHROME C OXIDASE SUBUNIT III"/>
    <property type="match status" value="1"/>
</dbReference>
<dbReference type="Pfam" id="PF00510">
    <property type="entry name" value="COX3"/>
    <property type="match status" value="1"/>
</dbReference>
<dbReference type="SUPFAM" id="SSF81452">
    <property type="entry name" value="Cytochrome c oxidase subunit III-like"/>
    <property type="match status" value="1"/>
</dbReference>
<dbReference type="PROSITE" id="PS50253">
    <property type="entry name" value="COX3"/>
    <property type="match status" value="1"/>
</dbReference>
<evidence type="ECO:0000250" key="1">
    <source>
        <dbReference type="UniProtKB" id="P00420"/>
    </source>
</evidence>
<evidence type="ECO:0000255" key="2"/>
<evidence type="ECO:0000305" key="3"/>
<feature type="chain" id="PRO_0000183753" description="Cytochrome c oxidase subunit 3">
    <location>
        <begin position="1"/>
        <end position="269"/>
    </location>
</feature>
<feature type="transmembrane region" description="Helical" evidence="2">
    <location>
        <begin position="7"/>
        <end position="29"/>
    </location>
</feature>
<feature type="transmembrane region" description="Helical" evidence="2">
    <location>
        <begin position="51"/>
        <end position="71"/>
    </location>
</feature>
<feature type="transmembrane region" description="Helical" evidence="2">
    <location>
        <begin position="90"/>
        <end position="110"/>
    </location>
</feature>
<feature type="transmembrane region" description="Helical" evidence="2">
    <location>
        <begin position="127"/>
        <end position="147"/>
    </location>
</feature>
<feature type="transmembrane region" description="Helical" evidence="2">
    <location>
        <begin position="167"/>
        <end position="187"/>
    </location>
</feature>
<feature type="transmembrane region" description="Helical" evidence="2">
    <location>
        <begin position="205"/>
        <end position="225"/>
    </location>
</feature>
<feature type="transmembrane region" description="Helical" evidence="2">
    <location>
        <begin position="247"/>
        <end position="267"/>
    </location>
</feature>
<geneLocation type="mitochondrion"/>
<accession>Q34214</accession>
<comment type="function">
    <text evidence="1">Component of the cytochrome c oxidase, the last enzyme in the mitochondrial electron transport chain which drives oxidative phosphorylation. The respiratory chain contains 3 multisubunit complexes succinate dehydrogenase (complex II, CII), ubiquinol-cytochrome c oxidoreductase (cytochrome b-c1 complex, complex III, CIII) and cytochrome c oxidase (complex IV, CIV), that cooperate to transfer electrons derived from NADH and succinate to molecular oxygen, creating an electrochemical gradient over the inner membrane that drives transmembrane transport and the ATP synthase. Cytochrome c oxidase is the component of the respiratory chain that catalyzes the reduction of oxygen to water. Electrons originating from reduced cytochrome c in the intermembrane space (IMS) are transferred via the dinuclear copper A center (CU(A)) of subunit 2 and heme A of subunit 1 to the active site in subunit 1, a binuclear center (BNC) formed by heme A3 and copper B (CU(B)). The BNC reduces molecular oxygen to 2 water molecules using 4 electrons from cytochrome c in the IMS and 4 protons from the mitochondrial matrix.</text>
</comment>
<comment type="catalytic activity">
    <reaction evidence="1">
        <text>4 Fe(II)-[cytochrome c] + O2 + 8 H(+)(in) = 4 Fe(III)-[cytochrome c] + 2 H2O + 4 H(+)(out)</text>
        <dbReference type="Rhea" id="RHEA:11436"/>
        <dbReference type="Rhea" id="RHEA-COMP:10350"/>
        <dbReference type="Rhea" id="RHEA-COMP:14399"/>
        <dbReference type="ChEBI" id="CHEBI:15377"/>
        <dbReference type="ChEBI" id="CHEBI:15378"/>
        <dbReference type="ChEBI" id="CHEBI:15379"/>
        <dbReference type="ChEBI" id="CHEBI:29033"/>
        <dbReference type="ChEBI" id="CHEBI:29034"/>
        <dbReference type="EC" id="7.1.1.9"/>
    </reaction>
    <physiologicalReaction direction="left-to-right" evidence="1">
        <dbReference type="Rhea" id="RHEA:11437"/>
    </physiologicalReaction>
</comment>
<comment type="subunit">
    <text evidence="1">Component of the cytochrome c oxidase (complex IV, CIV), a multisubunit enzyme composed of a catalytic core of 3 subunits and several supernumerary subunits. The complex exists as a monomer or a dimer and forms supercomplexes (SCs) in the inner mitochondrial membrane with ubiquinol-cytochrome c oxidoreductase (cytochrome b-c1 complex, complex III, CIII).</text>
</comment>
<comment type="subcellular location">
    <subcellularLocation>
        <location evidence="1">Mitochondrion inner membrane</location>
        <topology evidence="1">Multi-pass membrane protein</topology>
    </subcellularLocation>
</comment>
<comment type="similarity">
    <text evidence="3">Belongs to the cytochrome c oxidase subunit 3 family.</text>
</comment>
<keyword id="KW-0472">Membrane</keyword>
<keyword id="KW-0496">Mitochondrion</keyword>
<keyword id="KW-0999">Mitochondrion inner membrane</keyword>
<keyword id="KW-1278">Translocase</keyword>
<keyword id="KW-0812">Transmembrane</keyword>
<keyword id="KW-1133">Transmembrane helix</keyword>
<reference key="1">
    <citation type="journal article" date="1994" name="J. Bacteriol.">
        <title>NADH dehydrogenase subunit genes in the mitochondrial DNA of yeasts.</title>
        <authorList>
            <person name="Nosek J."/>
            <person name="Fukuhara H."/>
        </authorList>
    </citation>
    <scope>NUCLEOTIDE SEQUENCE [GENOMIC DNA]</scope>
    <source>
        <strain>SR23 / CBS 7157</strain>
    </source>
</reference>
<reference key="2">
    <citation type="journal article" date="2004" name="Mol. Genet. Genomics">
        <title>Complete DNA sequence of the linear mitochondrial genome of the pathogenic yeast Candida parapsilosis.</title>
        <authorList>
            <person name="Nosek J."/>
            <person name="Novotna M."/>
            <person name="Hlavatovicova Z."/>
            <person name="Ussery D.W."/>
            <person name="Fajkus J."/>
            <person name="Tomaska L."/>
        </authorList>
    </citation>
    <scope>NUCLEOTIDE SEQUENCE [LARGE SCALE GENOMIC DNA]</scope>
    <source>
        <strain>SR23 / CBS 7157</strain>
    </source>
</reference>
<protein>
    <recommendedName>
        <fullName>Cytochrome c oxidase subunit 3</fullName>
        <ecNumber>7.1.1.9</ecNumber>
    </recommendedName>
    <alternativeName>
        <fullName>Cytochrome c oxidase polypeptide III</fullName>
    </alternativeName>
    <alternativeName>
        <fullName>Cytochrome oxidase subunit 3</fullName>
    </alternativeName>
</protein>
<organism>
    <name type="scientific">Candida parapsilosis</name>
    <name type="common">Yeast</name>
    <dbReference type="NCBI Taxonomy" id="5480"/>
    <lineage>
        <taxon>Eukaryota</taxon>
        <taxon>Fungi</taxon>
        <taxon>Dikarya</taxon>
        <taxon>Ascomycota</taxon>
        <taxon>Saccharomycotina</taxon>
        <taxon>Pichiomycetes</taxon>
        <taxon>Debaryomycetaceae</taxon>
        <taxon>Candida/Lodderomyces clade</taxon>
        <taxon>Candida</taxon>
    </lineage>
</organism>